<proteinExistence type="inferred from homology"/>
<protein>
    <recommendedName>
        <fullName>Lysine--tRNA ligase</fullName>
        <ecNumber>6.1.1.6</ecNumber>
    </recommendedName>
    <alternativeName>
        <fullName>Lysyl-tRNA synthetase</fullName>
        <shortName>LysRS</shortName>
    </alternativeName>
</protein>
<feature type="chain" id="PRO_0000152699" description="Lysine--tRNA ligase">
    <location>
        <begin position="1"/>
        <end position="493"/>
    </location>
</feature>
<feature type="binding site" evidence="1">
    <location>
        <position position="402"/>
    </location>
    <ligand>
        <name>Mg(2+)</name>
        <dbReference type="ChEBI" id="CHEBI:18420"/>
        <label>1</label>
    </ligand>
</feature>
<feature type="binding site" evidence="1">
    <location>
        <position position="409"/>
    </location>
    <ligand>
        <name>Mg(2+)</name>
        <dbReference type="ChEBI" id="CHEBI:18420"/>
        <label>1</label>
    </ligand>
</feature>
<feature type="binding site" evidence="1">
    <location>
        <position position="409"/>
    </location>
    <ligand>
        <name>Mg(2+)</name>
        <dbReference type="ChEBI" id="CHEBI:18420"/>
        <label>2</label>
    </ligand>
</feature>
<comment type="catalytic activity">
    <reaction>
        <text>tRNA(Lys) + L-lysine + ATP = L-lysyl-tRNA(Lys) + AMP + diphosphate</text>
        <dbReference type="Rhea" id="RHEA:20792"/>
        <dbReference type="Rhea" id="RHEA-COMP:9696"/>
        <dbReference type="Rhea" id="RHEA-COMP:9697"/>
        <dbReference type="ChEBI" id="CHEBI:30616"/>
        <dbReference type="ChEBI" id="CHEBI:32551"/>
        <dbReference type="ChEBI" id="CHEBI:33019"/>
        <dbReference type="ChEBI" id="CHEBI:78442"/>
        <dbReference type="ChEBI" id="CHEBI:78529"/>
        <dbReference type="ChEBI" id="CHEBI:456215"/>
        <dbReference type="EC" id="6.1.1.6"/>
    </reaction>
</comment>
<comment type="cofactor">
    <cofactor evidence="1">
        <name>Mg(2+)</name>
        <dbReference type="ChEBI" id="CHEBI:18420"/>
    </cofactor>
    <text evidence="1">Binds 3 Mg(2+) ions per subunit.</text>
</comment>
<comment type="subunit">
    <text evidence="1">Homodimer.</text>
</comment>
<comment type="subcellular location">
    <subcellularLocation>
        <location evidence="1">Cytoplasm</location>
    </subcellularLocation>
</comment>
<comment type="similarity">
    <text evidence="2">Belongs to the class-II aminoacyl-tRNA synthetase family.</text>
</comment>
<gene>
    <name type="primary">lysS</name>
    <name type="ordered locus">UU062</name>
</gene>
<name>SYK_UREPA</name>
<dbReference type="EC" id="6.1.1.6"/>
<dbReference type="EMBL" id="AF222894">
    <property type="protein sequence ID" value="AAF30467.1"/>
    <property type="molecule type" value="Genomic_DNA"/>
</dbReference>
<dbReference type="RefSeq" id="WP_006688759.1">
    <property type="nucleotide sequence ID" value="NC_002162.1"/>
</dbReference>
<dbReference type="SMR" id="Q9PR83"/>
<dbReference type="STRING" id="273119.UU062"/>
<dbReference type="EnsemblBacteria" id="AAF30467">
    <property type="protein sequence ID" value="AAF30467"/>
    <property type="gene ID" value="UU062"/>
</dbReference>
<dbReference type="GeneID" id="29672283"/>
<dbReference type="KEGG" id="uur:UU062"/>
<dbReference type="eggNOG" id="COG1190">
    <property type="taxonomic scope" value="Bacteria"/>
</dbReference>
<dbReference type="HOGENOM" id="CLU_008255_6_0_14"/>
<dbReference type="OrthoDB" id="9801152at2"/>
<dbReference type="Proteomes" id="UP000000423">
    <property type="component" value="Chromosome"/>
</dbReference>
<dbReference type="GO" id="GO:0005829">
    <property type="term" value="C:cytosol"/>
    <property type="evidence" value="ECO:0007669"/>
    <property type="project" value="TreeGrafter"/>
</dbReference>
<dbReference type="GO" id="GO:0005524">
    <property type="term" value="F:ATP binding"/>
    <property type="evidence" value="ECO:0007669"/>
    <property type="project" value="UniProtKB-UniRule"/>
</dbReference>
<dbReference type="GO" id="GO:0004824">
    <property type="term" value="F:lysine-tRNA ligase activity"/>
    <property type="evidence" value="ECO:0007669"/>
    <property type="project" value="UniProtKB-UniRule"/>
</dbReference>
<dbReference type="GO" id="GO:0000287">
    <property type="term" value="F:magnesium ion binding"/>
    <property type="evidence" value="ECO:0007669"/>
    <property type="project" value="UniProtKB-UniRule"/>
</dbReference>
<dbReference type="GO" id="GO:0000049">
    <property type="term" value="F:tRNA binding"/>
    <property type="evidence" value="ECO:0007669"/>
    <property type="project" value="TreeGrafter"/>
</dbReference>
<dbReference type="GO" id="GO:0006430">
    <property type="term" value="P:lysyl-tRNA aminoacylation"/>
    <property type="evidence" value="ECO:0007669"/>
    <property type="project" value="UniProtKB-UniRule"/>
</dbReference>
<dbReference type="CDD" id="cd00775">
    <property type="entry name" value="LysRS_core"/>
    <property type="match status" value="1"/>
</dbReference>
<dbReference type="CDD" id="cd04322">
    <property type="entry name" value="LysRS_N"/>
    <property type="match status" value="1"/>
</dbReference>
<dbReference type="Gene3D" id="3.30.930.10">
    <property type="entry name" value="Bira Bifunctional Protein, Domain 2"/>
    <property type="match status" value="1"/>
</dbReference>
<dbReference type="Gene3D" id="2.40.50.140">
    <property type="entry name" value="Nucleic acid-binding proteins"/>
    <property type="match status" value="1"/>
</dbReference>
<dbReference type="HAMAP" id="MF_00252">
    <property type="entry name" value="Lys_tRNA_synth_class2"/>
    <property type="match status" value="1"/>
</dbReference>
<dbReference type="InterPro" id="IPR004364">
    <property type="entry name" value="Aa-tRNA-synt_II"/>
</dbReference>
<dbReference type="InterPro" id="IPR006195">
    <property type="entry name" value="aa-tRNA-synth_II"/>
</dbReference>
<dbReference type="InterPro" id="IPR045864">
    <property type="entry name" value="aa-tRNA-synth_II/BPL/LPL"/>
</dbReference>
<dbReference type="InterPro" id="IPR002313">
    <property type="entry name" value="Lys-tRNA-ligase_II"/>
</dbReference>
<dbReference type="InterPro" id="IPR044136">
    <property type="entry name" value="Lys-tRNA-ligase_II_N"/>
</dbReference>
<dbReference type="InterPro" id="IPR018149">
    <property type="entry name" value="Lys-tRNA-synth_II_C"/>
</dbReference>
<dbReference type="InterPro" id="IPR012340">
    <property type="entry name" value="NA-bd_OB-fold"/>
</dbReference>
<dbReference type="InterPro" id="IPR004365">
    <property type="entry name" value="NA-bd_OB_tRNA"/>
</dbReference>
<dbReference type="NCBIfam" id="TIGR00499">
    <property type="entry name" value="lysS_bact"/>
    <property type="match status" value="1"/>
</dbReference>
<dbReference type="NCBIfam" id="NF001756">
    <property type="entry name" value="PRK00484.1"/>
    <property type="match status" value="1"/>
</dbReference>
<dbReference type="PANTHER" id="PTHR42918:SF15">
    <property type="entry name" value="LYSINE--TRNA LIGASE, CHLOROPLASTIC_MITOCHONDRIAL"/>
    <property type="match status" value="1"/>
</dbReference>
<dbReference type="PANTHER" id="PTHR42918">
    <property type="entry name" value="LYSYL-TRNA SYNTHETASE"/>
    <property type="match status" value="1"/>
</dbReference>
<dbReference type="Pfam" id="PF00152">
    <property type="entry name" value="tRNA-synt_2"/>
    <property type="match status" value="1"/>
</dbReference>
<dbReference type="Pfam" id="PF01336">
    <property type="entry name" value="tRNA_anti-codon"/>
    <property type="match status" value="1"/>
</dbReference>
<dbReference type="PRINTS" id="PR00982">
    <property type="entry name" value="TRNASYNTHLYS"/>
</dbReference>
<dbReference type="SUPFAM" id="SSF55681">
    <property type="entry name" value="Class II aaRS and biotin synthetases"/>
    <property type="match status" value="1"/>
</dbReference>
<dbReference type="SUPFAM" id="SSF50249">
    <property type="entry name" value="Nucleic acid-binding proteins"/>
    <property type="match status" value="1"/>
</dbReference>
<dbReference type="PROSITE" id="PS50862">
    <property type="entry name" value="AA_TRNA_LIGASE_II"/>
    <property type="match status" value="1"/>
</dbReference>
<keyword id="KW-0030">Aminoacyl-tRNA synthetase</keyword>
<keyword id="KW-0067">ATP-binding</keyword>
<keyword id="KW-0963">Cytoplasm</keyword>
<keyword id="KW-0436">Ligase</keyword>
<keyword id="KW-0460">Magnesium</keyword>
<keyword id="KW-0479">Metal-binding</keyword>
<keyword id="KW-0547">Nucleotide-binding</keyword>
<keyword id="KW-0648">Protein biosynthesis</keyword>
<keyword id="KW-1185">Reference proteome</keyword>
<reference key="1">
    <citation type="journal article" date="2000" name="Nature">
        <title>The complete sequence of the mucosal pathogen Ureaplasma urealyticum.</title>
        <authorList>
            <person name="Glass J.I."/>
            <person name="Lefkowitz E.J."/>
            <person name="Glass J.S."/>
            <person name="Heiner C.R."/>
            <person name="Chen E.Y."/>
            <person name="Cassell G.H."/>
        </authorList>
    </citation>
    <scope>NUCLEOTIDE SEQUENCE [LARGE SCALE GENOMIC DNA]</scope>
    <source>
        <strain>ATCC 700970</strain>
    </source>
</reference>
<sequence>MERKFSDQELIRRTHLQELKNQNKNPFLITKVDRSMFLKDFAEKYKNFSKEELHNMDLEKLTLAGRLIGIRQTFGIIQDFSAKLQIYINKKNVAPEVFSTFKSLDIGDIIELEGVAMKTNSDEITLNVTNIRLVAKSLKVLPEKYHGLVDEEIKARQRYLDLIVNDETKNTFIKRSLIIREMRNWLDNKGFFEVETPVLQDILSGAAARPFITHHNTLNKEYYLRIATEIALKKCIIGGFEKVYEIGRIFRNEGMDSTHNPEFTSVELYIAYVDLWYIMQLTEDLIRHIATKLNLLNPTFRGFSIDLNKPFKKAHMVDLINEYVGVNFFEVKSDEQAIELAKKHHVKLLDHQKNFGHIVNAFFETFVEEKLVEPTFVYGHPLQVSPLTKKNQSDPRFVDRFELFICQKEFANAYSEINDPIDQYERFIAQLEEAKLGNDEASELDMEFIEALEYGMPPTGGLGIGVDRLVMLLTSNDSIRNVLLFPHMKDKTK</sequence>
<accession>Q9PR83</accession>
<evidence type="ECO:0000250" key="1"/>
<evidence type="ECO:0000305" key="2"/>
<organism>
    <name type="scientific">Ureaplasma parvum serovar 3 (strain ATCC 700970)</name>
    <dbReference type="NCBI Taxonomy" id="273119"/>
    <lineage>
        <taxon>Bacteria</taxon>
        <taxon>Bacillati</taxon>
        <taxon>Mycoplasmatota</taxon>
        <taxon>Mycoplasmoidales</taxon>
        <taxon>Mycoplasmoidaceae</taxon>
        <taxon>Ureaplasma</taxon>
    </lineage>
</organism>